<sequence>MTESNDTPIQTEEGDERQHRRIKSFVMRAGRMTEGQQRGLDQGAPKFVLPLADAPVDFDQVFGRSAPRSLEIGFGMGHSLLEMAAAAPEQDFIGVEVHRPGVGALLNGVLTQGLTNLRVYDCDAIEVLNRCIADNSLDRLMLFFPDPWHKSRHHKRRIVQASFAELVRSKLKVGGILHMATDWEPYAEYMLEVMNVAPGYRNLAEDGKCVPRPAERPITKFERRGERLGHGVWDLKFEKLA</sequence>
<reference key="1">
    <citation type="journal article" date="2009" name="Genome Biol.">
        <title>Genomic and genetic analyses of diversity and plant interactions of Pseudomonas fluorescens.</title>
        <authorList>
            <person name="Silby M.W."/>
            <person name="Cerdeno-Tarraga A.M."/>
            <person name="Vernikos G.S."/>
            <person name="Giddens S.R."/>
            <person name="Jackson R.W."/>
            <person name="Preston G.M."/>
            <person name="Zhang X.-X."/>
            <person name="Moon C.D."/>
            <person name="Gehrig S.M."/>
            <person name="Godfrey S.A.C."/>
            <person name="Knight C.G."/>
            <person name="Malone J.G."/>
            <person name="Robinson Z."/>
            <person name="Spiers A.J."/>
            <person name="Harris S."/>
            <person name="Challis G.L."/>
            <person name="Yaxley A.M."/>
            <person name="Harris D."/>
            <person name="Seeger K."/>
            <person name="Murphy L."/>
            <person name="Rutter S."/>
            <person name="Squares R."/>
            <person name="Quail M.A."/>
            <person name="Saunders E."/>
            <person name="Mavromatis K."/>
            <person name="Brettin T.S."/>
            <person name="Bentley S.D."/>
            <person name="Hothersall J."/>
            <person name="Stephens E."/>
            <person name="Thomas C.M."/>
            <person name="Parkhill J."/>
            <person name="Levy S.B."/>
            <person name="Rainey P.B."/>
            <person name="Thomson N.R."/>
        </authorList>
    </citation>
    <scope>NUCLEOTIDE SEQUENCE [LARGE SCALE GENOMIC DNA]</scope>
    <source>
        <strain>Pf0-1</strain>
    </source>
</reference>
<protein>
    <recommendedName>
        <fullName evidence="2">tRNA (guanine-N(7)-)-methyltransferase</fullName>
        <ecNumber evidence="2">2.1.1.33</ecNumber>
    </recommendedName>
    <alternativeName>
        <fullName evidence="2">tRNA (guanine(46)-N(7))-methyltransferase</fullName>
    </alternativeName>
    <alternativeName>
        <fullName evidence="2">tRNA(m7G46)-methyltransferase</fullName>
    </alternativeName>
</protein>
<keyword id="KW-0489">Methyltransferase</keyword>
<keyword id="KW-0949">S-adenosyl-L-methionine</keyword>
<keyword id="KW-0808">Transferase</keyword>
<keyword id="KW-0819">tRNA processing</keyword>
<organism>
    <name type="scientific">Pseudomonas fluorescens (strain Pf0-1)</name>
    <dbReference type="NCBI Taxonomy" id="205922"/>
    <lineage>
        <taxon>Bacteria</taxon>
        <taxon>Pseudomonadati</taxon>
        <taxon>Pseudomonadota</taxon>
        <taxon>Gammaproteobacteria</taxon>
        <taxon>Pseudomonadales</taxon>
        <taxon>Pseudomonadaceae</taxon>
        <taxon>Pseudomonas</taxon>
    </lineage>
</organism>
<proteinExistence type="inferred from homology"/>
<evidence type="ECO:0000250" key="1"/>
<evidence type="ECO:0000255" key="2">
    <source>
        <dbReference type="HAMAP-Rule" id="MF_01057"/>
    </source>
</evidence>
<evidence type="ECO:0000256" key="3">
    <source>
        <dbReference type="SAM" id="MobiDB-lite"/>
    </source>
</evidence>
<name>TRMB_PSEPF</name>
<feature type="chain" id="PRO_0000229186" description="tRNA (guanine-N(7)-)-methyltransferase">
    <location>
        <begin position="1"/>
        <end position="241"/>
    </location>
</feature>
<feature type="region of interest" description="Disordered" evidence="3">
    <location>
        <begin position="1"/>
        <end position="20"/>
    </location>
</feature>
<feature type="compositionally biased region" description="Polar residues" evidence="3">
    <location>
        <begin position="1"/>
        <end position="10"/>
    </location>
</feature>
<feature type="active site" evidence="1">
    <location>
        <position position="146"/>
    </location>
</feature>
<feature type="binding site" evidence="2">
    <location>
        <position position="71"/>
    </location>
    <ligand>
        <name>S-adenosyl-L-methionine</name>
        <dbReference type="ChEBI" id="CHEBI:59789"/>
    </ligand>
</feature>
<feature type="binding site" evidence="2">
    <location>
        <position position="96"/>
    </location>
    <ligand>
        <name>S-adenosyl-L-methionine</name>
        <dbReference type="ChEBI" id="CHEBI:59789"/>
    </ligand>
</feature>
<feature type="binding site" evidence="2">
    <location>
        <position position="123"/>
    </location>
    <ligand>
        <name>S-adenosyl-L-methionine</name>
        <dbReference type="ChEBI" id="CHEBI:59789"/>
    </ligand>
</feature>
<feature type="binding site" evidence="2">
    <location>
        <position position="146"/>
    </location>
    <ligand>
        <name>S-adenosyl-L-methionine</name>
        <dbReference type="ChEBI" id="CHEBI:59789"/>
    </ligand>
</feature>
<feature type="binding site" evidence="2">
    <location>
        <position position="150"/>
    </location>
    <ligand>
        <name>substrate</name>
    </ligand>
</feature>
<feature type="binding site" evidence="2">
    <location>
        <position position="182"/>
    </location>
    <ligand>
        <name>substrate</name>
    </ligand>
</feature>
<feature type="binding site" evidence="2">
    <location>
        <begin position="219"/>
        <end position="222"/>
    </location>
    <ligand>
        <name>substrate</name>
    </ligand>
</feature>
<comment type="function">
    <text evidence="2">Catalyzes the formation of N(7)-methylguanine at position 46 (m7G46) in tRNA.</text>
</comment>
<comment type="catalytic activity">
    <reaction evidence="2">
        <text>guanosine(46) in tRNA + S-adenosyl-L-methionine = N(7)-methylguanosine(46) in tRNA + S-adenosyl-L-homocysteine</text>
        <dbReference type="Rhea" id="RHEA:42708"/>
        <dbReference type="Rhea" id="RHEA-COMP:10188"/>
        <dbReference type="Rhea" id="RHEA-COMP:10189"/>
        <dbReference type="ChEBI" id="CHEBI:57856"/>
        <dbReference type="ChEBI" id="CHEBI:59789"/>
        <dbReference type="ChEBI" id="CHEBI:74269"/>
        <dbReference type="ChEBI" id="CHEBI:74480"/>
        <dbReference type="EC" id="2.1.1.33"/>
    </reaction>
</comment>
<comment type="pathway">
    <text evidence="2">tRNA modification; N(7)-methylguanine-tRNA biosynthesis.</text>
</comment>
<comment type="similarity">
    <text evidence="2">Belongs to the class I-like SAM-binding methyltransferase superfamily. TrmB family.</text>
</comment>
<dbReference type="EC" id="2.1.1.33" evidence="2"/>
<dbReference type="EMBL" id="CP000094">
    <property type="protein sequence ID" value="ABA77066.1"/>
    <property type="molecule type" value="Genomic_DNA"/>
</dbReference>
<dbReference type="RefSeq" id="WP_011336382.1">
    <property type="nucleotide sequence ID" value="NC_007492.2"/>
</dbReference>
<dbReference type="SMR" id="Q3K588"/>
<dbReference type="KEGG" id="pfo:Pfl01_5329"/>
<dbReference type="eggNOG" id="COG0220">
    <property type="taxonomic scope" value="Bacteria"/>
</dbReference>
<dbReference type="HOGENOM" id="CLU_050910_0_1_6"/>
<dbReference type="UniPathway" id="UPA00989"/>
<dbReference type="Proteomes" id="UP000002704">
    <property type="component" value="Chromosome"/>
</dbReference>
<dbReference type="GO" id="GO:0043527">
    <property type="term" value="C:tRNA methyltransferase complex"/>
    <property type="evidence" value="ECO:0007669"/>
    <property type="project" value="TreeGrafter"/>
</dbReference>
<dbReference type="GO" id="GO:0008176">
    <property type="term" value="F:tRNA (guanine(46)-N7)-methyltransferase activity"/>
    <property type="evidence" value="ECO:0007669"/>
    <property type="project" value="UniProtKB-UniRule"/>
</dbReference>
<dbReference type="CDD" id="cd02440">
    <property type="entry name" value="AdoMet_MTases"/>
    <property type="match status" value="1"/>
</dbReference>
<dbReference type="FunFam" id="3.40.50.150:FF:000035">
    <property type="entry name" value="tRNA (guanine-N(7)-)-methyltransferase"/>
    <property type="match status" value="1"/>
</dbReference>
<dbReference type="Gene3D" id="3.40.50.150">
    <property type="entry name" value="Vaccinia Virus protein VP39"/>
    <property type="match status" value="1"/>
</dbReference>
<dbReference type="HAMAP" id="MF_01057">
    <property type="entry name" value="tRNA_methyltr_TrmB"/>
    <property type="match status" value="1"/>
</dbReference>
<dbReference type="InterPro" id="IPR029063">
    <property type="entry name" value="SAM-dependent_MTases_sf"/>
</dbReference>
<dbReference type="InterPro" id="IPR003358">
    <property type="entry name" value="tRNA_(Gua-N-7)_MeTrfase_Trmb"/>
</dbReference>
<dbReference type="InterPro" id="IPR055361">
    <property type="entry name" value="tRNA_methyltr_TrmB_bact"/>
</dbReference>
<dbReference type="NCBIfam" id="TIGR00091">
    <property type="entry name" value="tRNA (guanosine(46)-N7)-methyltransferase TrmB"/>
    <property type="match status" value="1"/>
</dbReference>
<dbReference type="PANTHER" id="PTHR23417">
    <property type="entry name" value="3-DEOXY-D-MANNO-OCTULOSONIC-ACID TRANSFERASE/TRNA GUANINE-N 7 - -METHYLTRANSFERASE"/>
    <property type="match status" value="1"/>
</dbReference>
<dbReference type="PANTHER" id="PTHR23417:SF14">
    <property type="entry name" value="PENTACOTRIPEPTIDE-REPEAT REGION OF PRORP DOMAIN-CONTAINING PROTEIN"/>
    <property type="match status" value="1"/>
</dbReference>
<dbReference type="Pfam" id="PF02390">
    <property type="entry name" value="Methyltransf_4"/>
    <property type="match status" value="1"/>
</dbReference>
<dbReference type="SUPFAM" id="SSF53335">
    <property type="entry name" value="S-adenosyl-L-methionine-dependent methyltransferases"/>
    <property type="match status" value="1"/>
</dbReference>
<dbReference type="PROSITE" id="PS51625">
    <property type="entry name" value="SAM_MT_TRMB"/>
    <property type="match status" value="1"/>
</dbReference>
<accession>Q3K588</accession>
<gene>
    <name evidence="2" type="primary">trmB</name>
    <name type="ordered locus">Pfl01_5329</name>
</gene>